<accession>B4TQU8</accession>
<dbReference type="EC" id="4.6.1.17" evidence="1"/>
<dbReference type="EMBL" id="CP001127">
    <property type="protein sequence ID" value="ACF89653.1"/>
    <property type="molecule type" value="Genomic_DNA"/>
</dbReference>
<dbReference type="RefSeq" id="WP_000080894.1">
    <property type="nucleotide sequence ID" value="NC_011094.1"/>
</dbReference>
<dbReference type="SMR" id="B4TQU8"/>
<dbReference type="KEGG" id="sew:SeSA_A0953"/>
<dbReference type="HOGENOM" id="CLU_074693_1_1_6"/>
<dbReference type="UniPathway" id="UPA00344"/>
<dbReference type="Proteomes" id="UP000001865">
    <property type="component" value="Chromosome"/>
</dbReference>
<dbReference type="GO" id="GO:0061799">
    <property type="term" value="F:cyclic pyranopterin monophosphate synthase activity"/>
    <property type="evidence" value="ECO:0007669"/>
    <property type="project" value="UniProtKB-UniRule"/>
</dbReference>
<dbReference type="GO" id="GO:0006777">
    <property type="term" value="P:Mo-molybdopterin cofactor biosynthetic process"/>
    <property type="evidence" value="ECO:0007669"/>
    <property type="project" value="UniProtKB-UniRule"/>
</dbReference>
<dbReference type="CDD" id="cd01420">
    <property type="entry name" value="MoaC_PE"/>
    <property type="match status" value="1"/>
</dbReference>
<dbReference type="FunFam" id="3.30.70.640:FF:000001">
    <property type="entry name" value="Cyclic pyranopterin monophosphate synthase"/>
    <property type="match status" value="1"/>
</dbReference>
<dbReference type="Gene3D" id="3.30.70.640">
    <property type="entry name" value="Molybdopterin cofactor biosynthesis C (MoaC) domain"/>
    <property type="match status" value="1"/>
</dbReference>
<dbReference type="HAMAP" id="MF_01224_B">
    <property type="entry name" value="MoaC_B"/>
    <property type="match status" value="1"/>
</dbReference>
<dbReference type="InterPro" id="IPR023045">
    <property type="entry name" value="MoaC"/>
</dbReference>
<dbReference type="InterPro" id="IPR047594">
    <property type="entry name" value="MoaC_bact/euk"/>
</dbReference>
<dbReference type="InterPro" id="IPR036522">
    <property type="entry name" value="MoaC_sf"/>
</dbReference>
<dbReference type="InterPro" id="IPR050105">
    <property type="entry name" value="MoCo_biosynth_MoaA/MoaC"/>
</dbReference>
<dbReference type="InterPro" id="IPR002820">
    <property type="entry name" value="Mopterin_CF_biosynth-C_dom"/>
</dbReference>
<dbReference type="NCBIfam" id="TIGR00581">
    <property type="entry name" value="moaC"/>
    <property type="match status" value="1"/>
</dbReference>
<dbReference type="NCBIfam" id="NF006870">
    <property type="entry name" value="PRK09364.1"/>
    <property type="match status" value="1"/>
</dbReference>
<dbReference type="PANTHER" id="PTHR22960">
    <property type="entry name" value="MOLYBDOPTERIN COFACTOR SYNTHESIS PROTEIN A"/>
    <property type="match status" value="1"/>
</dbReference>
<dbReference type="Pfam" id="PF01967">
    <property type="entry name" value="MoaC"/>
    <property type="match status" value="1"/>
</dbReference>
<dbReference type="SUPFAM" id="SSF55040">
    <property type="entry name" value="Molybdenum cofactor biosynthesis protein C, MoaC"/>
    <property type="match status" value="1"/>
</dbReference>
<keyword id="KW-0456">Lyase</keyword>
<keyword id="KW-0501">Molybdenum cofactor biosynthesis</keyword>
<proteinExistence type="inferred from homology"/>
<organism>
    <name type="scientific">Salmonella schwarzengrund (strain CVM19633)</name>
    <dbReference type="NCBI Taxonomy" id="439843"/>
    <lineage>
        <taxon>Bacteria</taxon>
        <taxon>Pseudomonadati</taxon>
        <taxon>Pseudomonadota</taxon>
        <taxon>Gammaproteobacteria</taxon>
        <taxon>Enterobacterales</taxon>
        <taxon>Enterobacteriaceae</taxon>
        <taxon>Salmonella</taxon>
    </lineage>
</organism>
<reference key="1">
    <citation type="journal article" date="2011" name="J. Bacteriol.">
        <title>Comparative genomics of 28 Salmonella enterica isolates: evidence for CRISPR-mediated adaptive sublineage evolution.</title>
        <authorList>
            <person name="Fricke W.F."/>
            <person name="Mammel M.K."/>
            <person name="McDermott P.F."/>
            <person name="Tartera C."/>
            <person name="White D.G."/>
            <person name="Leclerc J.E."/>
            <person name="Ravel J."/>
            <person name="Cebula T.A."/>
        </authorList>
    </citation>
    <scope>NUCLEOTIDE SEQUENCE [LARGE SCALE GENOMIC DNA]</scope>
    <source>
        <strain>CVM19633</strain>
    </source>
</reference>
<sequence length="161" mass="17443">MSQLTHINAAGEAHMVDVSAKAETVREARAEAFVTMRSETLAMIVDGKHHKGDVFATARIAGIQAAKRTWELIPLCHPLLLSKVEIQLQAEPEHNRVRIESLCRLTGKTGVEMEALTAASVAALTIYDMCKAVQKDMVIGPVRLLAKSGGKSGDFKVDAHD</sequence>
<protein>
    <recommendedName>
        <fullName evidence="1">Cyclic pyranopterin monophosphate synthase</fullName>
        <ecNumber evidence="1">4.6.1.17</ecNumber>
    </recommendedName>
    <alternativeName>
        <fullName evidence="1">Molybdenum cofactor biosynthesis protein C</fullName>
    </alternativeName>
</protein>
<name>MOAC_SALSV</name>
<evidence type="ECO:0000255" key="1">
    <source>
        <dbReference type="HAMAP-Rule" id="MF_01224"/>
    </source>
</evidence>
<gene>
    <name evidence="1" type="primary">moaC</name>
    <name type="ordered locus">SeSA_A0953</name>
</gene>
<feature type="chain" id="PRO_1000139296" description="Cyclic pyranopterin monophosphate synthase">
    <location>
        <begin position="1"/>
        <end position="161"/>
    </location>
</feature>
<feature type="active site" evidence="1">
    <location>
        <position position="128"/>
    </location>
</feature>
<feature type="binding site" evidence="1">
    <location>
        <begin position="75"/>
        <end position="77"/>
    </location>
    <ligand>
        <name>substrate</name>
    </ligand>
</feature>
<feature type="binding site" evidence="1">
    <location>
        <begin position="113"/>
        <end position="114"/>
    </location>
    <ligand>
        <name>substrate</name>
    </ligand>
</feature>
<comment type="function">
    <text evidence="1">Catalyzes the conversion of (8S)-3',8-cyclo-7,8-dihydroguanosine 5'-triphosphate to cyclic pyranopterin monophosphate (cPMP).</text>
</comment>
<comment type="catalytic activity">
    <reaction evidence="1">
        <text>(8S)-3',8-cyclo-7,8-dihydroguanosine 5'-triphosphate = cyclic pyranopterin phosphate + diphosphate</text>
        <dbReference type="Rhea" id="RHEA:49580"/>
        <dbReference type="ChEBI" id="CHEBI:33019"/>
        <dbReference type="ChEBI" id="CHEBI:59648"/>
        <dbReference type="ChEBI" id="CHEBI:131766"/>
        <dbReference type="EC" id="4.6.1.17"/>
    </reaction>
</comment>
<comment type="pathway">
    <text evidence="1">Cofactor biosynthesis; molybdopterin biosynthesis.</text>
</comment>
<comment type="subunit">
    <text evidence="1">Homohexamer; trimer of dimers.</text>
</comment>
<comment type="similarity">
    <text evidence="1">Belongs to the MoaC family.</text>
</comment>